<sequence length="548" mass="60230">MKKVTAMLFSMAVGLNAVSMAAKAKASEEQETDVLLIGGGIMSATLGTYLRELEPEWSMTMVERLEGVAQESSNGWNNAGTGHSALMELNYTPQNADGSISIEKAVAINEAFQISRQFWAHQVERGVLRTPRSFINTVPHMSFVWGEDNVNFLRARYAALQQSSLFRGMRYSEDHAQIKEWAPLVMEGRDPQQKVAATRTEIGTDVNYGEITRQLIASLQKKSNFSLQLSSEVRALKRNDDNTWTVTVADLKNGTAQNIRAKFVFIGAGGAALKLLQESGIPEAKDYAGFPVGGQFLVSENPDVVNHHLAKVYGKASVGAPPMSVPHIDTRVLDGKRVVLFGPFATFSTKFLKNGSLWDLMSSTTTSNVMPMMHVGLDNFDLVKYLVSQVMLSEEDRFEALKEYYPQAKKEDWRLWQAGQRVQIIKRDADKGGVLRLGTEVVSDQQGTIAALLGASPGASTAAPIMLNLLEKVFGDRVSSPQWQATLKAIVPSYGRKLNGDVAATERELQYTSEVLGLKYDKPQAADSTPKPQLKPQPVQKEVADIAL</sequence>
<name>MQO_ECOK1</name>
<comment type="catalytic activity">
    <reaction evidence="1">
        <text>(S)-malate + a quinone = a quinol + oxaloacetate</text>
        <dbReference type="Rhea" id="RHEA:46012"/>
        <dbReference type="ChEBI" id="CHEBI:15589"/>
        <dbReference type="ChEBI" id="CHEBI:16452"/>
        <dbReference type="ChEBI" id="CHEBI:24646"/>
        <dbReference type="ChEBI" id="CHEBI:132124"/>
        <dbReference type="EC" id="1.1.5.4"/>
    </reaction>
</comment>
<comment type="cofactor">
    <cofactor evidence="1">
        <name>FAD</name>
        <dbReference type="ChEBI" id="CHEBI:57692"/>
    </cofactor>
</comment>
<comment type="pathway">
    <text evidence="1">Carbohydrate metabolism; tricarboxylic acid cycle; oxaloacetate from (S)-malate (quinone route): step 1/1.</text>
</comment>
<comment type="similarity">
    <text evidence="1">Belongs to the MQO family.</text>
</comment>
<organism>
    <name type="scientific">Escherichia coli O1:K1 / APEC</name>
    <dbReference type="NCBI Taxonomy" id="405955"/>
    <lineage>
        <taxon>Bacteria</taxon>
        <taxon>Pseudomonadati</taxon>
        <taxon>Pseudomonadota</taxon>
        <taxon>Gammaproteobacteria</taxon>
        <taxon>Enterobacterales</taxon>
        <taxon>Enterobacteriaceae</taxon>
        <taxon>Escherichia</taxon>
    </lineage>
</organism>
<accession>A1AD63</accession>
<dbReference type="EC" id="1.1.5.4" evidence="1"/>
<dbReference type="EMBL" id="CP000468">
    <property type="protein sequence ID" value="ABJ01603.1"/>
    <property type="molecule type" value="Genomic_DNA"/>
</dbReference>
<dbReference type="RefSeq" id="WP_000758066.1">
    <property type="nucleotide sequence ID" value="NZ_CADILS010000004.1"/>
</dbReference>
<dbReference type="SMR" id="A1AD63"/>
<dbReference type="KEGG" id="ecv:APECO1_4349"/>
<dbReference type="HOGENOM" id="CLU_028151_0_0_6"/>
<dbReference type="UniPathway" id="UPA00223">
    <property type="reaction ID" value="UER01008"/>
</dbReference>
<dbReference type="Proteomes" id="UP000008216">
    <property type="component" value="Chromosome"/>
</dbReference>
<dbReference type="GO" id="GO:0047545">
    <property type="term" value="F:2-hydroxyglutarate dehydrogenase activity"/>
    <property type="evidence" value="ECO:0007669"/>
    <property type="project" value="TreeGrafter"/>
</dbReference>
<dbReference type="GO" id="GO:0008924">
    <property type="term" value="F:L-malate dehydrogenase (quinone) activity"/>
    <property type="evidence" value="ECO:0007669"/>
    <property type="project" value="UniProtKB-UniRule"/>
</dbReference>
<dbReference type="GO" id="GO:0006099">
    <property type="term" value="P:tricarboxylic acid cycle"/>
    <property type="evidence" value="ECO:0007669"/>
    <property type="project" value="UniProtKB-UniRule"/>
</dbReference>
<dbReference type="Gene3D" id="3.30.9.10">
    <property type="entry name" value="D-Amino Acid Oxidase, subunit A, domain 2"/>
    <property type="match status" value="1"/>
</dbReference>
<dbReference type="Gene3D" id="3.50.50.60">
    <property type="entry name" value="FAD/NAD(P)-binding domain"/>
    <property type="match status" value="1"/>
</dbReference>
<dbReference type="HAMAP" id="MF_00212">
    <property type="entry name" value="MQO"/>
    <property type="match status" value="1"/>
</dbReference>
<dbReference type="InterPro" id="IPR036188">
    <property type="entry name" value="FAD/NAD-bd_sf"/>
</dbReference>
<dbReference type="InterPro" id="IPR006231">
    <property type="entry name" value="MQO"/>
</dbReference>
<dbReference type="NCBIfam" id="TIGR01320">
    <property type="entry name" value="mal_quin_oxido"/>
    <property type="match status" value="1"/>
</dbReference>
<dbReference type="NCBIfam" id="NF003603">
    <property type="entry name" value="PRK05257.1-1"/>
    <property type="match status" value="1"/>
</dbReference>
<dbReference type="NCBIfam" id="NF003605">
    <property type="entry name" value="PRK05257.1-4"/>
    <property type="match status" value="1"/>
</dbReference>
<dbReference type="NCBIfam" id="NF003606">
    <property type="entry name" value="PRK05257.2-1"/>
    <property type="match status" value="1"/>
</dbReference>
<dbReference type="NCBIfam" id="NF003608">
    <property type="entry name" value="PRK05257.2-4"/>
    <property type="match status" value="1"/>
</dbReference>
<dbReference type="NCBIfam" id="NF003611">
    <property type="entry name" value="PRK05257.3-2"/>
    <property type="match status" value="1"/>
</dbReference>
<dbReference type="NCBIfam" id="NF009875">
    <property type="entry name" value="PRK13339.1"/>
    <property type="match status" value="1"/>
</dbReference>
<dbReference type="PANTHER" id="PTHR43104">
    <property type="entry name" value="L-2-HYDROXYGLUTARATE DEHYDROGENASE, MITOCHONDRIAL"/>
    <property type="match status" value="1"/>
</dbReference>
<dbReference type="PANTHER" id="PTHR43104:SF2">
    <property type="entry name" value="L-2-HYDROXYGLUTARATE DEHYDROGENASE, MITOCHONDRIAL"/>
    <property type="match status" value="1"/>
</dbReference>
<dbReference type="Pfam" id="PF06039">
    <property type="entry name" value="Mqo"/>
    <property type="match status" value="1"/>
</dbReference>
<dbReference type="SUPFAM" id="SSF51905">
    <property type="entry name" value="FAD/NAD(P)-binding domain"/>
    <property type="match status" value="1"/>
</dbReference>
<proteinExistence type="inferred from homology"/>
<reference key="1">
    <citation type="journal article" date="2007" name="J. Bacteriol.">
        <title>The genome sequence of avian pathogenic Escherichia coli strain O1:K1:H7 shares strong similarities with human extraintestinal pathogenic E. coli genomes.</title>
        <authorList>
            <person name="Johnson T.J."/>
            <person name="Kariyawasam S."/>
            <person name="Wannemuehler Y."/>
            <person name="Mangiamele P."/>
            <person name="Johnson S.J."/>
            <person name="Doetkott C."/>
            <person name="Skyberg J.A."/>
            <person name="Lynne A.M."/>
            <person name="Johnson J.R."/>
            <person name="Nolan L.K."/>
        </authorList>
    </citation>
    <scope>NUCLEOTIDE SEQUENCE [LARGE SCALE GENOMIC DNA]</scope>
</reference>
<protein>
    <recommendedName>
        <fullName evidence="1">Probable malate:quinone oxidoreductase</fullName>
        <ecNumber evidence="1">1.1.5.4</ecNumber>
    </recommendedName>
    <alternativeName>
        <fullName evidence="1">MQO</fullName>
    </alternativeName>
    <alternativeName>
        <fullName evidence="1">Malate dehydrogenase [quinone]</fullName>
    </alternativeName>
</protein>
<gene>
    <name evidence="1" type="primary">mqo</name>
    <name type="ordered locus">Ecok1_21090</name>
    <name type="ORF">APECO1_4349</name>
</gene>
<keyword id="KW-0274">FAD</keyword>
<keyword id="KW-0285">Flavoprotein</keyword>
<keyword id="KW-0560">Oxidoreductase</keyword>
<keyword id="KW-1185">Reference proteome</keyword>
<keyword id="KW-0816">Tricarboxylic acid cycle</keyword>
<evidence type="ECO:0000255" key="1">
    <source>
        <dbReference type="HAMAP-Rule" id="MF_00212"/>
    </source>
</evidence>
<evidence type="ECO:0000256" key="2">
    <source>
        <dbReference type="SAM" id="MobiDB-lite"/>
    </source>
</evidence>
<feature type="chain" id="PRO_1000023798" description="Probable malate:quinone oxidoreductase">
    <location>
        <begin position="1"/>
        <end position="548"/>
    </location>
</feature>
<feature type="region of interest" description="Disordered" evidence="2">
    <location>
        <begin position="521"/>
        <end position="548"/>
    </location>
</feature>
<feature type="compositionally biased region" description="Low complexity" evidence="2">
    <location>
        <begin position="530"/>
        <end position="541"/>
    </location>
</feature>